<dbReference type="EMBL" id="AF127795">
    <property type="protein sequence ID" value="AAD26861.1"/>
    <property type="molecule type" value="Genomic_DNA"/>
</dbReference>
<dbReference type="SMR" id="Q9X5V4"/>
<dbReference type="GO" id="GO:0005737">
    <property type="term" value="C:cytoplasm"/>
    <property type="evidence" value="ECO:0007669"/>
    <property type="project" value="UniProtKB-SubCell"/>
</dbReference>
<dbReference type="GO" id="GO:0005507">
    <property type="term" value="F:copper ion binding"/>
    <property type="evidence" value="ECO:0007669"/>
    <property type="project" value="InterPro"/>
</dbReference>
<dbReference type="GO" id="GO:0003677">
    <property type="term" value="F:DNA binding"/>
    <property type="evidence" value="ECO:0007669"/>
    <property type="project" value="UniProtKB-KW"/>
</dbReference>
<dbReference type="GO" id="GO:0003700">
    <property type="term" value="F:DNA-binding transcription factor activity"/>
    <property type="evidence" value="ECO:0007669"/>
    <property type="project" value="InterPro"/>
</dbReference>
<dbReference type="GO" id="GO:0045893">
    <property type="term" value="P:positive regulation of DNA-templated transcription"/>
    <property type="evidence" value="ECO:0007669"/>
    <property type="project" value="InterPro"/>
</dbReference>
<dbReference type="CDD" id="cd01108">
    <property type="entry name" value="HTH_CueR"/>
    <property type="match status" value="1"/>
</dbReference>
<dbReference type="Gene3D" id="1.10.1660.10">
    <property type="match status" value="1"/>
</dbReference>
<dbReference type="InterPro" id="IPR011789">
    <property type="entry name" value="CueR"/>
</dbReference>
<dbReference type="InterPro" id="IPR009061">
    <property type="entry name" value="DNA-bd_dom_put_sf"/>
</dbReference>
<dbReference type="InterPro" id="IPR000551">
    <property type="entry name" value="MerR-type_HTH_dom"/>
</dbReference>
<dbReference type="InterPro" id="IPR047057">
    <property type="entry name" value="MerR_fam"/>
</dbReference>
<dbReference type="InterPro" id="IPR015358">
    <property type="entry name" value="Tscrpt_reg_MerR_DNA-bd"/>
</dbReference>
<dbReference type="NCBIfam" id="TIGR02044">
    <property type="entry name" value="CueR"/>
    <property type="match status" value="1"/>
</dbReference>
<dbReference type="PANTHER" id="PTHR30204:SF94">
    <property type="entry name" value="HEAVY METAL-DEPENDENT TRANSCRIPTIONAL REGULATOR HI_0293-RELATED"/>
    <property type="match status" value="1"/>
</dbReference>
<dbReference type="PANTHER" id="PTHR30204">
    <property type="entry name" value="REDOX-CYCLING DRUG-SENSING TRANSCRIPTIONAL ACTIVATOR SOXR"/>
    <property type="match status" value="1"/>
</dbReference>
<dbReference type="Pfam" id="PF00376">
    <property type="entry name" value="MerR"/>
    <property type="match status" value="1"/>
</dbReference>
<dbReference type="Pfam" id="PF09278">
    <property type="entry name" value="MerR-DNA-bind"/>
    <property type="match status" value="1"/>
</dbReference>
<dbReference type="PRINTS" id="PR00040">
    <property type="entry name" value="HTHMERR"/>
</dbReference>
<dbReference type="SMART" id="SM00422">
    <property type="entry name" value="HTH_MERR"/>
    <property type="match status" value="1"/>
</dbReference>
<dbReference type="SUPFAM" id="SSF46955">
    <property type="entry name" value="Putative DNA-binding domain"/>
    <property type="match status" value="1"/>
</dbReference>
<dbReference type="PROSITE" id="PS50937">
    <property type="entry name" value="HTH_MERR_2"/>
    <property type="match status" value="1"/>
</dbReference>
<name>HMMR_RHILV</name>
<comment type="function">
    <text evidence="2">Regulates the transcription of actP. It detects cytoplasmic copper stress and activates transcription in response to increasing copper concentrations. In the absence of copper, it negatively regulates the transcription of actP.</text>
</comment>
<comment type="subunit">
    <text evidence="3">Homodimer.</text>
</comment>
<comment type="subcellular location">
    <subcellularLocation>
        <location evidence="3">Cytoplasm</location>
    </subcellularLocation>
</comment>
<accession>Q9X5V4</accession>
<proteinExistence type="predicted"/>
<sequence length="129" mass="14743">MNIGEASERSGLPSKTIRYYEDIGLIRPERGGNGYRDYAATDVHKLRFLQRSRGLGFSVEECRQLLALYEDKDRASADVRDIAQTKLTEIDRKIRELTELRRTLEHLVHACHGNDRPDCPILEELSDGA</sequence>
<gene>
    <name type="primary">hmrR</name>
</gene>
<feature type="chain" id="PRO_0000098123" description="HTH-type transcriptional regulator HmrR">
    <location>
        <begin position="1"/>
        <end position="129"/>
    </location>
</feature>
<feature type="domain" description="HTH merR-type" evidence="1">
    <location>
        <begin position="1"/>
        <end position="68"/>
    </location>
</feature>
<feature type="DNA-binding region" description="H-T-H motif" evidence="1">
    <location>
        <begin position="4"/>
        <end position="23"/>
    </location>
</feature>
<reference key="1">
    <citation type="journal article" date="2002" name="Mol. Microbiol.">
        <title>ActP controls copper homeostasis in Rhizobium leguminosarum bv. viciae and Sinorhizobium meliloti preventing low pH-induced copper toxicity.</title>
        <authorList>
            <person name="Reeve W.G."/>
            <person name="Tiwari R.P."/>
            <person name="Kale N.B."/>
            <person name="Dilworth M.J."/>
            <person name="Glenn A.R."/>
        </authorList>
    </citation>
    <scope>NUCLEOTIDE SEQUENCE [GENOMIC DNA]</scope>
    <scope>FUNCTION</scope>
    <source>
        <strain>WSM710</strain>
    </source>
</reference>
<protein>
    <recommendedName>
        <fullName>HTH-type transcriptional regulator HmrR</fullName>
    </recommendedName>
    <alternativeName>
        <fullName>Copper efflux regulator</fullName>
    </alternativeName>
    <alternativeName>
        <fullName>Copper export regulator</fullName>
    </alternativeName>
</protein>
<organism>
    <name type="scientific">Rhizobium leguminosarum bv. viciae</name>
    <dbReference type="NCBI Taxonomy" id="387"/>
    <lineage>
        <taxon>Bacteria</taxon>
        <taxon>Pseudomonadati</taxon>
        <taxon>Pseudomonadota</taxon>
        <taxon>Alphaproteobacteria</taxon>
        <taxon>Hyphomicrobiales</taxon>
        <taxon>Rhizobiaceae</taxon>
        <taxon>Rhizobium/Agrobacterium group</taxon>
        <taxon>Rhizobium</taxon>
    </lineage>
</organism>
<evidence type="ECO:0000255" key="1">
    <source>
        <dbReference type="PROSITE-ProRule" id="PRU00254"/>
    </source>
</evidence>
<evidence type="ECO:0000269" key="2">
    <source>
    </source>
</evidence>
<evidence type="ECO:0000305" key="3"/>
<keyword id="KW-0010">Activator</keyword>
<keyword id="KW-0186">Copper</keyword>
<keyword id="KW-0963">Cytoplasm</keyword>
<keyword id="KW-0238">DNA-binding</keyword>
<keyword id="KW-0678">Repressor</keyword>
<keyword id="KW-0804">Transcription</keyword>
<keyword id="KW-0805">Transcription regulation</keyword>